<dbReference type="EC" id="3.1.1.3"/>
<dbReference type="EMBL" id="CH476595">
    <property type="protein sequence ID" value="EAU38245.1"/>
    <property type="molecule type" value="Genomic_DNA"/>
</dbReference>
<dbReference type="RefSeq" id="XP_001208853.1">
    <property type="nucleotide sequence ID" value="XM_001208853.1"/>
</dbReference>
<dbReference type="STRING" id="341663.Q0CXU6"/>
<dbReference type="ESTHER" id="asptn-atg15">
    <property type="family name" value="ATG15-related-lipase"/>
</dbReference>
<dbReference type="GlyCosmos" id="Q0CXU6">
    <property type="glycosylation" value="5 sites, No reported glycans"/>
</dbReference>
<dbReference type="EnsemblFungi" id="EAU38245">
    <property type="protein sequence ID" value="EAU38245"/>
    <property type="gene ID" value="ATEG_01488"/>
</dbReference>
<dbReference type="GeneID" id="4315897"/>
<dbReference type="VEuPathDB" id="FungiDB:ATEG_01488"/>
<dbReference type="eggNOG" id="KOG4540">
    <property type="taxonomic scope" value="Eukaryota"/>
</dbReference>
<dbReference type="HOGENOM" id="CLU_028295_0_1_1"/>
<dbReference type="OMA" id="TYHFGHT"/>
<dbReference type="OrthoDB" id="58570at2759"/>
<dbReference type="Proteomes" id="UP000007963">
    <property type="component" value="Unassembled WGS sequence"/>
</dbReference>
<dbReference type="GO" id="GO:0032585">
    <property type="term" value="C:multivesicular body membrane"/>
    <property type="evidence" value="ECO:0007669"/>
    <property type="project" value="UniProtKB-SubCell"/>
</dbReference>
<dbReference type="GO" id="GO:0005775">
    <property type="term" value="C:vacuolar lumen"/>
    <property type="evidence" value="ECO:0007669"/>
    <property type="project" value="TreeGrafter"/>
</dbReference>
<dbReference type="GO" id="GO:0004620">
    <property type="term" value="F:phospholipase activity"/>
    <property type="evidence" value="ECO:0007669"/>
    <property type="project" value="TreeGrafter"/>
</dbReference>
<dbReference type="GO" id="GO:0004806">
    <property type="term" value="F:triacylglycerol lipase activity"/>
    <property type="evidence" value="ECO:0007669"/>
    <property type="project" value="UniProtKB-EC"/>
</dbReference>
<dbReference type="GO" id="GO:0034496">
    <property type="term" value="P:multivesicular body membrane disassembly"/>
    <property type="evidence" value="ECO:0007669"/>
    <property type="project" value="TreeGrafter"/>
</dbReference>
<dbReference type="GO" id="GO:0046461">
    <property type="term" value="P:neutral lipid catabolic process"/>
    <property type="evidence" value="ECO:0007669"/>
    <property type="project" value="TreeGrafter"/>
</dbReference>
<dbReference type="GO" id="GO:0006660">
    <property type="term" value="P:phosphatidylserine catabolic process"/>
    <property type="evidence" value="ECO:0007669"/>
    <property type="project" value="TreeGrafter"/>
</dbReference>
<dbReference type="GO" id="GO:0034727">
    <property type="term" value="P:piecemeal microautophagy of the nucleus"/>
    <property type="evidence" value="ECO:0007669"/>
    <property type="project" value="TreeGrafter"/>
</dbReference>
<dbReference type="CDD" id="cd00519">
    <property type="entry name" value="Lipase_3"/>
    <property type="match status" value="1"/>
</dbReference>
<dbReference type="FunFam" id="3.40.50.1820:FF:000129">
    <property type="entry name" value="Autophagy related lipase Atg15, putative"/>
    <property type="match status" value="1"/>
</dbReference>
<dbReference type="Gene3D" id="3.40.50.1820">
    <property type="entry name" value="alpha/beta hydrolase"/>
    <property type="match status" value="1"/>
</dbReference>
<dbReference type="InterPro" id="IPR029058">
    <property type="entry name" value="AB_hydrolase_fold"/>
</dbReference>
<dbReference type="InterPro" id="IPR050805">
    <property type="entry name" value="ATG15_Lipase"/>
</dbReference>
<dbReference type="InterPro" id="IPR002921">
    <property type="entry name" value="Fungal_lipase-type"/>
</dbReference>
<dbReference type="PANTHER" id="PTHR47175">
    <property type="entry name" value="LIPASE ATG15-RELATED"/>
    <property type="match status" value="1"/>
</dbReference>
<dbReference type="PANTHER" id="PTHR47175:SF2">
    <property type="entry name" value="LIPASE ATG15-RELATED"/>
    <property type="match status" value="1"/>
</dbReference>
<dbReference type="Pfam" id="PF01764">
    <property type="entry name" value="Lipase_3"/>
    <property type="match status" value="1"/>
</dbReference>
<dbReference type="SUPFAM" id="SSF53474">
    <property type="entry name" value="alpha/beta-Hydrolases"/>
    <property type="match status" value="1"/>
</dbReference>
<dbReference type="PROSITE" id="PS00120">
    <property type="entry name" value="LIPASE_SER"/>
    <property type="match status" value="1"/>
</dbReference>
<organism>
    <name type="scientific">Aspergillus terreus (strain NIH 2624 / FGSC A1156)</name>
    <dbReference type="NCBI Taxonomy" id="341663"/>
    <lineage>
        <taxon>Eukaryota</taxon>
        <taxon>Fungi</taxon>
        <taxon>Dikarya</taxon>
        <taxon>Ascomycota</taxon>
        <taxon>Pezizomycotina</taxon>
        <taxon>Eurotiomycetes</taxon>
        <taxon>Eurotiomycetidae</taxon>
        <taxon>Eurotiales</taxon>
        <taxon>Aspergillaceae</taxon>
        <taxon>Aspergillus</taxon>
        <taxon>Aspergillus subgen. Circumdati</taxon>
    </lineage>
</organism>
<feature type="chain" id="PRO_0000317959" description="Putative lipase atg15">
    <location>
        <begin position="1"/>
        <end position="613"/>
    </location>
</feature>
<feature type="topological domain" description="Cytoplasmic" evidence="1">
    <location>
        <begin position="1"/>
        <end position="20"/>
    </location>
</feature>
<feature type="transmembrane region" description="Helical; Signal-anchor for type II membrane protein">
    <location>
        <begin position="21"/>
        <end position="43"/>
    </location>
</feature>
<feature type="topological domain" description="Lumenal" evidence="1">
    <location>
        <begin position="44"/>
        <end position="613"/>
    </location>
</feature>
<feature type="region of interest" description="Disordered" evidence="5">
    <location>
        <begin position="472"/>
        <end position="492"/>
    </location>
</feature>
<feature type="compositionally biased region" description="Low complexity" evidence="5">
    <location>
        <begin position="473"/>
        <end position="492"/>
    </location>
</feature>
<feature type="active site" description="Charge relay system" evidence="4">
    <location>
        <position position="322"/>
    </location>
</feature>
<feature type="glycosylation site" description="N-linked (GlcNAc...) asparagine" evidence="3">
    <location>
        <position position="202"/>
    </location>
</feature>
<feature type="glycosylation site" description="N-linked (GlcNAc...) asparagine" evidence="3">
    <location>
        <position position="224"/>
    </location>
</feature>
<feature type="glycosylation site" description="N-linked (GlcNAc...) asparagine" evidence="3">
    <location>
        <position position="282"/>
    </location>
</feature>
<feature type="glycosylation site" description="N-linked (GlcNAc...) asparagine" evidence="3">
    <location>
        <position position="306"/>
    </location>
</feature>
<feature type="glycosylation site" description="N-linked (GlcNAc...) asparagine" evidence="3">
    <location>
        <position position="468"/>
    </location>
</feature>
<protein>
    <recommendedName>
        <fullName>Putative lipase atg15</fullName>
        <ecNumber>3.1.1.3</ecNumber>
    </recommendedName>
    <alternativeName>
        <fullName>Autophagy-related protein 15</fullName>
    </alternativeName>
</protein>
<name>ATG15_ASPTN</name>
<reference key="1">
    <citation type="submission" date="2005-09" db="EMBL/GenBank/DDBJ databases">
        <title>Annotation of the Aspergillus terreus NIH2624 genome.</title>
        <authorList>
            <person name="Birren B.W."/>
            <person name="Lander E.S."/>
            <person name="Galagan J.E."/>
            <person name="Nusbaum C."/>
            <person name="Devon K."/>
            <person name="Henn M."/>
            <person name="Ma L.-J."/>
            <person name="Jaffe D.B."/>
            <person name="Butler J."/>
            <person name="Alvarez P."/>
            <person name="Gnerre S."/>
            <person name="Grabherr M."/>
            <person name="Kleber M."/>
            <person name="Mauceli E.W."/>
            <person name="Brockman W."/>
            <person name="Rounsley S."/>
            <person name="Young S.K."/>
            <person name="LaButti K."/>
            <person name="Pushparaj V."/>
            <person name="DeCaprio D."/>
            <person name="Crawford M."/>
            <person name="Koehrsen M."/>
            <person name="Engels R."/>
            <person name="Montgomery P."/>
            <person name="Pearson M."/>
            <person name="Howarth C."/>
            <person name="Larson L."/>
            <person name="Luoma S."/>
            <person name="White J."/>
            <person name="Alvarado L."/>
            <person name="Kodira C.D."/>
            <person name="Zeng Q."/>
            <person name="Oleary S."/>
            <person name="Yandava C."/>
            <person name="Denning D.W."/>
            <person name="Nierman W.C."/>
            <person name="Milne T."/>
            <person name="Madden K."/>
        </authorList>
    </citation>
    <scope>NUCLEOTIDE SEQUENCE [LARGE SCALE GENOMIC DNA]</scope>
    <source>
        <strain>NIH 2624 / FGSC A1156</strain>
    </source>
</reference>
<proteinExistence type="inferred from homology"/>
<gene>
    <name type="primary">atg15</name>
    <name type="ORF">ATEG_01488</name>
</gene>
<evidence type="ECO:0000250" key="1"/>
<evidence type="ECO:0000250" key="2">
    <source>
        <dbReference type="UniProtKB" id="P25641"/>
    </source>
</evidence>
<evidence type="ECO:0000255" key="3"/>
<evidence type="ECO:0000255" key="4">
    <source>
        <dbReference type="PROSITE-ProRule" id="PRU10037"/>
    </source>
</evidence>
<evidence type="ECO:0000256" key="5">
    <source>
        <dbReference type="SAM" id="MobiDB-lite"/>
    </source>
</evidence>
<evidence type="ECO:0000305" key="6"/>
<keyword id="KW-0072">Autophagy</keyword>
<keyword id="KW-0967">Endosome</keyword>
<keyword id="KW-0325">Glycoprotein</keyword>
<keyword id="KW-0378">Hydrolase</keyword>
<keyword id="KW-0442">Lipid degradation</keyword>
<keyword id="KW-0443">Lipid metabolism</keyword>
<keyword id="KW-0472">Membrane</keyword>
<keyword id="KW-1185">Reference proteome</keyword>
<keyword id="KW-0735">Signal-anchor</keyword>
<keyword id="KW-0812">Transmembrane</keyword>
<keyword id="KW-1133">Transmembrane helix</keyword>
<accession>Q0CXU6</accession>
<comment type="function">
    <text evidence="1">Lipase which is essential for lysis of subvacuolar cytoplasm to vacuole targeted bodies and intravacuolar autophagic bodies. Involved in the lysis of intravacuolar multivesicular body (MVB) vesicles. The intravacuolar membrane disintegration by atg15 is critical to life span extension (By similarity).</text>
</comment>
<comment type="catalytic activity">
    <reaction>
        <text>a triacylglycerol + H2O = a diacylglycerol + a fatty acid + H(+)</text>
        <dbReference type="Rhea" id="RHEA:12044"/>
        <dbReference type="ChEBI" id="CHEBI:15377"/>
        <dbReference type="ChEBI" id="CHEBI:15378"/>
        <dbReference type="ChEBI" id="CHEBI:17855"/>
        <dbReference type="ChEBI" id="CHEBI:18035"/>
        <dbReference type="ChEBI" id="CHEBI:28868"/>
        <dbReference type="EC" id="3.1.1.3"/>
    </reaction>
</comment>
<comment type="subunit">
    <text evidence="1">Binds to both phosphatidylinositol (PI) and phosphatidylinositol 3,5-bisphosphate (PIP2).</text>
</comment>
<comment type="subcellular location">
    <subcellularLocation>
        <location evidence="2">Endosome</location>
        <location evidence="2">Multivesicular body membrane</location>
        <topology evidence="2">Single-pass type II membrane protein</topology>
    </subcellularLocation>
    <subcellularLocation>
        <location evidence="2">Prevacuolar compartment membrane</location>
        <topology evidence="2">Single-pass type II membrane protein</topology>
    </subcellularLocation>
    <text evidence="2">From ER, targeted to vacuolar lumen at the MVB vesicles via the Golgi and the prevacuolar compartment (PVC).</text>
</comment>
<comment type="similarity">
    <text evidence="6">Belongs to the AB hydrolase superfamily. Lipase family.</text>
</comment>
<sequence>MKSHQGHQKKRRMREMGFSTLLLGASLLLPVSVSASAPPSIYSRPYDSSPFLSPQIPLEDLSSLSGTHEFTLRHIFHRGTYQHPDLHRRLDIQPHTQLWVLSEDGTDKEAAEFDTPLIASSHPVTIQRLADRRPSVIEEHLLAARMSGSASVLSESDWVMDTLAGPDVTDKNSVLTFAKMTANDYIQEPDTEDWQDIHGRFNYSSSFGWQTDGLRGHIYADKTNSTIVISLKGTSPALFDGAGTTTNDKLNDNLYFSCCCGQGGSYLWRQVCDCQKSAFTANLTCIIEAMNDENRYYRAALDLYSNVTELYPDANVWLTGHSLGGAMTSLLGLTYGLPAVTFEAVPEALPAARLGLPSPPGHDPRLPQSRRYTGAYHFGHTADPVYMGTCNGVSSVCTWGGYAMESACHTGQMCVYDTVDDKGWRVAIGTHRIKAVISDVLEVYDDVPQCAPEEECYDCELWKFFRSNGSEHTTTTTTTTTTTTTPPSTSTSTCKTPGWWGCLDESTTTTATSTSTTSTSTTTCKTPGWFGCKDPTTSTTATPEPSLTTTLPLMTSTTCAHPGWFGCRDPTSPTSTPTQTPPPGDTTSCESPGFFWGCWDPKTTSDHPITTPP</sequence>